<sequence>MNALIAVQNNAVDSGQDYSGFTLIPSAQSPRLLELTFTEQTTKQFLEQVAEWPVQALEYKSFLRFRVGKILDDLCANQLQPLLLKPLLNRAEGALLINAVGIDDVAQADEMVKLATAVAHLIGRSNFDAMSGQYYARFVVKNVDNSDSYLRQPHRVMELHNDGTYVEEITDYVLMMKIDEQNMQGGNSLLLHLDDWEHLDHYFRHPLARRPMRFAAPPSKNVSKDVFHPVFDVDQQGRPVMRYIDQFVQPKDFEEGVWLSELSDAIETSKGILSVPVPVGKFLLINNLFWLHGRDRFTPHPDLRRELMRQRGYFAYATHHYQTHQ</sequence>
<dbReference type="EC" id="1.14.11.64" evidence="1"/>
<dbReference type="EMBL" id="CP001063">
    <property type="protein sequence ID" value="ACD07306.1"/>
    <property type="molecule type" value="Genomic_DNA"/>
</dbReference>
<dbReference type="RefSeq" id="WP_004986208.1">
    <property type="nucleotide sequence ID" value="NC_010658.1"/>
</dbReference>
<dbReference type="SMR" id="B2U084"/>
<dbReference type="STRING" id="344609.SbBS512_E3222"/>
<dbReference type="KEGG" id="sbc:SbBS512_E3222"/>
<dbReference type="HOGENOM" id="CLU_075277_0_0_6"/>
<dbReference type="Proteomes" id="UP000001030">
    <property type="component" value="Chromosome"/>
</dbReference>
<dbReference type="GO" id="GO:0008198">
    <property type="term" value="F:ferrous iron binding"/>
    <property type="evidence" value="ECO:0007669"/>
    <property type="project" value="UniProtKB-UniRule"/>
</dbReference>
<dbReference type="GO" id="GO:0106343">
    <property type="term" value="F:glutarate dioxygenase activity"/>
    <property type="evidence" value="ECO:0007669"/>
    <property type="project" value="UniProtKB-EC"/>
</dbReference>
<dbReference type="GO" id="GO:0050498">
    <property type="term" value="F:oxidoreductase activity, acting on paired donors, with incorporation or reduction of molecular oxygen, with 2-oxoglutarate as one donor, and the other dehydrogenated"/>
    <property type="evidence" value="ECO:0007669"/>
    <property type="project" value="UniProtKB-UniRule"/>
</dbReference>
<dbReference type="GO" id="GO:0019477">
    <property type="term" value="P:L-lysine catabolic process"/>
    <property type="evidence" value="ECO:0007669"/>
    <property type="project" value="UniProtKB-UniRule"/>
</dbReference>
<dbReference type="CDD" id="cd00250">
    <property type="entry name" value="CAS_like"/>
    <property type="match status" value="1"/>
</dbReference>
<dbReference type="FunFam" id="3.60.130.10:FF:000004">
    <property type="entry name" value="Glutarate 2-hydroxylase"/>
    <property type="match status" value="1"/>
</dbReference>
<dbReference type="Gene3D" id="3.60.130.10">
    <property type="entry name" value="Clavaminate synthase-like"/>
    <property type="match status" value="1"/>
</dbReference>
<dbReference type="HAMAP" id="MF_01083">
    <property type="entry name" value="glutarate_hydroxylase"/>
    <property type="match status" value="1"/>
</dbReference>
<dbReference type="InterPro" id="IPR015038">
    <property type="entry name" value="GlaH"/>
</dbReference>
<dbReference type="InterPro" id="IPR042098">
    <property type="entry name" value="TauD-like_sf"/>
</dbReference>
<dbReference type="NCBIfam" id="NF002814">
    <property type="entry name" value="PRK02963.1"/>
    <property type="match status" value="1"/>
</dbReference>
<dbReference type="Pfam" id="PF08943">
    <property type="entry name" value="CsiD"/>
    <property type="match status" value="1"/>
</dbReference>
<dbReference type="SUPFAM" id="SSF51197">
    <property type="entry name" value="Clavaminate synthase-like"/>
    <property type="match status" value="1"/>
</dbReference>
<gene>
    <name evidence="1" type="primary">glaH</name>
    <name type="ordered locus">SbBS512_E3222</name>
</gene>
<keyword id="KW-0223">Dioxygenase</keyword>
<keyword id="KW-0408">Iron</keyword>
<keyword id="KW-0479">Metal-binding</keyword>
<keyword id="KW-0560">Oxidoreductase</keyword>
<keyword id="KW-1185">Reference proteome</keyword>
<evidence type="ECO:0000255" key="1">
    <source>
        <dbReference type="HAMAP-Rule" id="MF_01083"/>
    </source>
</evidence>
<comment type="function">
    <text evidence="1">Acts as an alpha-ketoglutarate-dependent dioxygenase catalyzing hydroxylation of glutarate (GA) to L-2-hydroxyglutarate (L2HG). Functions in a L-lysine degradation pathway that proceeds via cadaverine, glutarate and L-2-hydroxyglutarate.</text>
</comment>
<comment type="catalytic activity">
    <reaction evidence="1">
        <text>glutarate + 2-oxoglutarate + O2 = (S)-2-hydroxyglutarate + succinate + CO2</text>
        <dbReference type="Rhea" id="RHEA:13821"/>
        <dbReference type="ChEBI" id="CHEBI:15379"/>
        <dbReference type="ChEBI" id="CHEBI:16526"/>
        <dbReference type="ChEBI" id="CHEBI:16782"/>
        <dbReference type="ChEBI" id="CHEBI:16810"/>
        <dbReference type="ChEBI" id="CHEBI:30031"/>
        <dbReference type="ChEBI" id="CHEBI:30921"/>
        <dbReference type="EC" id="1.14.11.64"/>
    </reaction>
    <physiologicalReaction direction="left-to-right" evidence="1">
        <dbReference type="Rhea" id="RHEA:13822"/>
    </physiologicalReaction>
</comment>
<comment type="cofactor">
    <cofactor evidence="1">
        <name>Fe(2+)</name>
        <dbReference type="ChEBI" id="CHEBI:29033"/>
    </cofactor>
    <text evidence="1">Binds 1 Fe(2+) ion per subunit.</text>
</comment>
<comment type="pathway">
    <text evidence="1">Amino-acid degradation.</text>
</comment>
<comment type="subunit">
    <text evidence="1">Homotetramer.</text>
</comment>
<comment type="similarity">
    <text evidence="1">Belongs to the glutarate hydroxylase family.</text>
</comment>
<proteinExistence type="inferred from homology"/>
<reference key="1">
    <citation type="submission" date="2008-05" db="EMBL/GenBank/DDBJ databases">
        <title>Complete sequence of Shigella boydii serotype 18 strain BS512.</title>
        <authorList>
            <person name="Rasko D.A."/>
            <person name="Rosovitz M."/>
            <person name="Maurelli A.T."/>
            <person name="Myers G."/>
            <person name="Seshadri R."/>
            <person name="Cer R."/>
            <person name="Jiang L."/>
            <person name="Ravel J."/>
            <person name="Sebastian Y."/>
        </authorList>
    </citation>
    <scope>NUCLEOTIDE SEQUENCE [LARGE SCALE GENOMIC DNA]</scope>
    <source>
        <strain>CDC 3083-94 / BS512</strain>
    </source>
</reference>
<accession>B2U084</accession>
<name>GLAH_SHIB3</name>
<organism>
    <name type="scientific">Shigella boydii serotype 18 (strain CDC 3083-94 / BS512)</name>
    <dbReference type="NCBI Taxonomy" id="344609"/>
    <lineage>
        <taxon>Bacteria</taxon>
        <taxon>Pseudomonadati</taxon>
        <taxon>Pseudomonadota</taxon>
        <taxon>Gammaproteobacteria</taxon>
        <taxon>Enterobacterales</taxon>
        <taxon>Enterobacteriaceae</taxon>
        <taxon>Shigella</taxon>
    </lineage>
</organism>
<feature type="chain" id="PRO_1000136874" description="Glutarate 2-hydroxylase">
    <location>
        <begin position="1"/>
        <end position="325"/>
    </location>
</feature>
<feature type="binding site" evidence="1">
    <location>
        <position position="160"/>
    </location>
    <ligand>
        <name>Fe cation</name>
        <dbReference type="ChEBI" id="CHEBI:24875"/>
    </ligand>
</feature>
<feature type="binding site" evidence="1">
    <location>
        <position position="162"/>
    </location>
    <ligand>
        <name>Fe cation</name>
        <dbReference type="ChEBI" id="CHEBI:24875"/>
    </ligand>
</feature>
<feature type="binding site" evidence="1">
    <location>
        <position position="292"/>
    </location>
    <ligand>
        <name>Fe cation</name>
        <dbReference type="ChEBI" id="CHEBI:24875"/>
    </ligand>
</feature>
<protein>
    <recommendedName>
        <fullName evidence="1">Glutarate 2-hydroxylase</fullName>
        <shortName evidence="1">G-2-H</shortName>
        <ecNumber evidence="1">1.14.11.64</ecNumber>
    </recommendedName>
</protein>